<name>RARA_ECOLI</name>
<sequence>MSNLSLDFSDNTFQPLAARMRPENLAQYIGQQHLLAAGKPLPRAIEAGHLHSMILWGPPGTGKTTLAEVIARYANADVERISAVTSGVKEIREAIERARQNRNAGRRTILFVDEVHRFNKSQQDAFLPHIEDGTITFIGATTENPSFELNSALLSRARVYLLKSLSTEDIEQVLTQAMEDKTRGYGGQDIVLPDETRRAIAELVNGDARRALNTLEMMADMAEVDDSGKRVLKPELLTEIAGERSARFDNKGDRFYDLISALHKSVRGSAPDAALYWYARIITAGGDPLYVARRCLAIASEDVGNADPRAMQVAIAAWDCFTRVGPAEGERAIAQAIVYLACAPKSNAVYTAFKAALADARERPDYDVPVHLRNAPTKLMKEMGYGQEYRYAHDEANAYAAGEVYFPPEIAQTRYYFPTNRGLEGKIGEKLAWLAEQDQNSPIKRYR</sequence>
<comment type="function">
    <text evidence="1 2 3">DNA-dependent ATPase that plays important roles in cellular responses to stalled DNA replication processes.</text>
</comment>
<comment type="subunit">
    <text evidence="3">Homotetramer. Interacts with the single-stranded DNA-binding protein (ssb).</text>
</comment>
<comment type="domain">
    <text evidence="3">Contains an N-terminal ATP-binding domain, an adjacent helical lid domain, and a C-terminal tetramerization domain.</text>
</comment>
<comment type="disruption phenotype">
    <text evidence="1">Mutation gives no obvious mutant phenotype, but, when combined with xer or dif mutants, leads to slower growth.</text>
</comment>
<comment type="miscellaneous">
    <text evidence="2">Overexpression causes an increase in mutation frequency and inhibits growth of recA mutant.</text>
</comment>
<comment type="similarity">
    <text evidence="6">Belongs to the AAA ATPase family. RarA/MGS1/WRNIP1 subfamily.</text>
</comment>
<comment type="sequence caution" evidence="6">
    <conflict type="frameshift">
        <sequence resource="EMBL" id="X05017"/>
    </conflict>
</comment>
<organism>
    <name type="scientific">Escherichia coli (strain K12)</name>
    <dbReference type="NCBI Taxonomy" id="83333"/>
    <lineage>
        <taxon>Bacteria</taxon>
        <taxon>Pseudomonadati</taxon>
        <taxon>Pseudomonadota</taxon>
        <taxon>Gammaproteobacteria</taxon>
        <taxon>Enterobacterales</taxon>
        <taxon>Enterobacteriaceae</taxon>
        <taxon>Escherichia</taxon>
    </lineage>
</organism>
<accession>P0AAZ4</accession>
<accession>P45526</accession>
<accession>P75833</accession>
<keyword id="KW-0002">3D-structure</keyword>
<keyword id="KW-0067">ATP-binding</keyword>
<keyword id="KW-0235">DNA replication</keyword>
<keyword id="KW-0547">Nucleotide-binding</keyword>
<keyword id="KW-1185">Reference proteome</keyword>
<reference key="1">
    <citation type="journal article" date="1996" name="DNA Res.">
        <title>A 718-kb DNA sequence of the Escherichia coli K-12 genome corresponding to the 12.7-28.0 min region on the linkage map.</title>
        <authorList>
            <person name="Oshima T."/>
            <person name="Aiba H."/>
            <person name="Baba T."/>
            <person name="Fujita K."/>
            <person name="Hayashi K."/>
            <person name="Honjo A."/>
            <person name="Ikemoto K."/>
            <person name="Inada T."/>
            <person name="Itoh T."/>
            <person name="Kajihara M."/>
            <person name="Kanai K."/>
            <person name="Kashimoto K."/>
            <person name="Kimura S."/>
            <person name="Kitagawa M."/>
            <person name="Makino K."/>
            <person name="Masuda S."/>
            <person name="Miki T."/>
            <person name="Mizobuchi K."/>
            <person name="Mori H."/>
            <person name="Motomura K."/>
            <person name="Nakamura Y."/>
            <person name="Nashimoto H."/>
            <person name="Nishio Y."/>
            <person name="Saito N."/>
            <person name="Sampei G."/>
            <person name="Seki Y."/>
            <person name="Tagami H."/>
            <person name="Takemoto K."/>
            <person name="Wada C."/>
            <person name="Yamamoto Y."/>
            <person name="Yano M."/>
            <person name="Horiuchi T."/>
        </authorList>
    </citation>
    <scope>NUCLEOTIDE SEQUENCE [LARGE SCALE GENOMIC DNA]</scope>
    <source>
        <strain>K12 / W3110 / ATCC 27325 / DSM 5911</strain>
    </source>
</reference>
<reference key="2">
    <citation type="journal article" date="1997" name="Science">
        <title>The complete genome sequence of Escherichia coli K-12.</title>
        <authorList>
            <person name="Blattner F.R."/>
            <person name="Plunkett G. III"/>
            <person name="Bloch C.A."/>
            <person name="Perna N.T."/>
            <person name="Burland V."/>
            <person name="Riley M."/>
            <person name="Collado-Vides J."/>
            <person name="Glasner J.D."/>
            <person name="Rode C.K."/>
            <person name="Mayhew G.F."/>
            <person name="Gregor J."/>
            <person name="Davis N.W."/>
            <person name="Kirkpatrick H.A."/>
            <person name="Goeden M.A."/>
            <person name="Rose D.J."/>
            <person name="Mau B."/>
            <person name="Shao Y."/>
        </authorList>
    </citation>
    <scope>NUCLEOTIDE SEQUENCE [LARGE SCALE GENOMIC DNA]</scope>
    <source>
        <strain>K12 / MG1655 / ATCC 47076</strain>
    </source>
</reference>
<reference key="3">
    <citation type="journal article" date="2006" name="Mol. Syst. Biol.">
        <title>Highly accurate genome sequences of Escherichia coli K-12 strains MG1655 and W3110.</title>
        <authorList>
            <person name="Hayashi K."/>
            <person name="Morooka N."/>
            <person name="Yamamoto Y."/>
            <person name="Fujita K."/>
            <person name="Isono K."/>
            <person name="Choi S."/>
            <person name="Ohtsubo E."/>
            <person name="Baba T."/>
            <person name="Wanner B.L."/>
            <person name="Mori H."/>
            <person name="Horiuchi T."/>
        </authorList>
    </citation>
    <scope>NUCLEOTIDE SEQUENCE [LARGE SCALE GENOMIC DNA]</scope>
    <source>
        <strain>K12 / W3110 / ATCC 27325 / DSM 5911</strain>
    </source>
</reference>
<reference key="4">
    <citation type="journal article" date="1995" name="EMBO J.">
        <title>A novel periplasmic carrier protein involved in the sorting and transport of Escherichia coli lipoproteins destined for the outer membrane.</title>
        <authorList>
            <person name="Matsuyama S."/>
            <person name="Tajima T."/>
            <person name="Tokuda H."/>
        </authorList>
    </citation>
    <scope>NUCLEOTIDE SEQUENCE [GENOMIC DNA] OF 1-61</scope>
    <source>
        <strain>K12 / MC4100 / ATCC 35695 / DSM 6574</strain>
    </source>
</reference>
<reference key="5">
    <citation type="journal article" date="1987" name="Nucleic Acids Res.">
        <title>Cloning and characterization of the gene for Escherichia coli seryl-tRNA synthetase.</title>
        <authorList>
            <person name="Haertlein M."/>
            <person name="Madern D."/>
            <person name="Leberman R."/>
        </authorList>
    </citation>
    <scope>NUCLEOTIDE SEQUENCE [GENOMIC DNA] OF 367-447</scope>
    <source>
        <strain>K12</strain>
    </source>
</reference>
<reference key="6">
    <citation type="journal article" date="1995" name="Nucleic Acids Res.">
        <title>Detection of new genes in a bacterial genome using Markov models for three gene classes.</title>
        <authorList>
            <person name="Borodovsky M."/>
            <person name="McIninch J."/>
            <person name="Koonin E.V."/>
            <person name="Rudd K.E."/>
            <person name="Medigue C."/>
            <person name="Danchin A."/>
        </authorList>
    </citation>
    <scope>IDENTIFICATION</scope>
</reference>
<reference key="7">
    <citation type="journal article" date="2001" name="Proc. Natl. Acad. Sci. U.S.A.">
        <title>Circles: the replication-recombination-chromosome segregation connection.</title>
        <authorList>
            <person name="Barre F.X."/>
            <person name="Soballe B."/>
            <person name="Michel B."/>
            <person name="Aroyo M."/>
            <person name="Robertson M."/>
            <person name="Sherratt D."/>
        </authorList>
    </citation>
    <scope>FUNCTION IN RECOMBINATION</scope>
    <scope>DISRUPTION PHENOTYPE</scope>
    <scope>GENE NAME</scope>
</reference>
<reference key="8">
    <citation type="journal article" date="2005" name="Genes Cells">
        <title>Functional overlap between RecA and MgsA (RarA) in the rescue of stalled replication forks in Escherichia coli.</title>
        <authorList>
            <person name="Shibata T."/>
            <person name="Hishida T."/>
            <person name="Kubota Y."/>
            <person name="Han Y.W."/>
            <person name="Iwasaki H."/>
            <person name="Shinagawa H."/>
        </authorList>
    </citation>
    <scope>FUNCTION</scope>
    <scope>OVEREXPRESSION</scope>
</reference>
<reference key="9">
    <citation type="journal article" date="2011" name="J. Biol. Chem.">
        <title>Structure and biochemical activities of Escherichia coli MgsA.</title>
        <authorList>
            <person name="Page A.N."/>
            <person name="George N.P."/>
            <person name="Marceau A.H."/>
            <person name="Cox M.M."/>
            <person name="Keck J.L."/>
        </authorList>
    </citation>
    <scope>X-RAY CRYSTALLOGRAPHY (2.50 ANGSTROMS) IN COMPLEX WITH PHOSPHATE</scope>
    <scope>FUNCTION</scope>
    <scope>ATPASE ACTIVITY</scope>
    <scope>SUBUNIT</scope>
    <scope>INTERACTION WITH SSB</scope>
    <scope>DOMAIN</scope>
    <scope>MUTAGENESIS OF ARG-156</scope>
</reference>
<protein>
    <recommendedName>
        <fullName evidence="4">Replication-associated recombination protein A</fullName>
    </recommendedName>
</protein>
<evidence type="ECO:0000269" key="1">
    <source>
    </source>
</evidence>
<evidence type="ECO:0000269" key="2">
    <source>
    </source>
</evidence>
<evidence type="ECO:0000269" key="3">
    <source>
    </source>
</evidence>
<evidence type="ECO:0000303" key="4">
    <source>
    </source>
</evidence>
<evidence type="ECO:0000303" key="5">
    <source>
    </source>
</evidence>
<evidence type="ECO:0000305" key="6"/>
<evidence type="ECO:0000305" key="7">
    <source>
    </source>
</evidence>
<dbReference type="EMBL" id="U00096">
    <property type="protein sequence ID" value="AAC73978.1"/>
    <property type="molecule type" value="Genomic_DNA"/>
</dbReference>
<dbReference type="EMBL" id="AP009048">
    <property type="protein sequence ID" value="BAA35617.1"/>
    <property type="molecule type" value="Genomic_DNA"/>
</dbReference>
<dbReference type="EMBL" id="D49398">
    <property type="status" value="NOT_ANNOTATED_CDS"/>
    <property type="molecule type" value="Genomic_DNA"/>
</dbReference>
<dbReference type="EMBL" id="X05017">
    <property type="status" value="NOT_ANNOTATED_CDS"/>
    <property type="molecule type" value="Genomic_DNA"/>
</dbReference>
<dbReference type="PIR" id="C64828">
    <property type="entry name" value="C64828"/>
</dbReference>
<dbReference type="RefSeq" id="NP_415412.1">
    <property type="nucleotide sequence ID" value="NC_000913.3"/>
</dbReference>
<dbReference type="RefSeq" id="WP_000067755.1">
    <property type="nucleotide sequence ID" value="NZ_STEB01000006.1"/>
</dbReference>
<dbReference type="PDB" id="3PVS">
    <property type="method" value="X-ray"/>
    <property type="resolution" value="2.50 A"/>
    <property type="chains" value="A/B/C/D=1-447"/>
</dbReference>
<dbReference type="PDBsum" id="3PVS"/>
<dbReference type="SMR" id="P0AAZ4"/>
<dbReference type="BioGRID" id="4259357">
    <property type="interactions" value="66"/>
</dbReference>
<dbReference type="DIP" id="DIP-48151N"/>
<dbReference type="FunCoup" id="P0AAZ4">
    <property type="interactions" value="432"/>
</dbReference>
<dbReference type="IntAct" id="P0AAZ4">
    <property type="interactions" value="7"/>
</dbReference>
<dbReference type="STRING" id="511145.b0892"/>
<dbReference type="jPOST" id="P0AAZ4"/>
<dbReference type="PaxDb" id="511145-b0892"/>
<dbReference type="EnsemblBacteria" id="AAC73978">
    <property type="protein sequence ID" value="AAC73978"/>
    <property type="gene ID" value="b0892"/>
</dbReference>
<dbReference type="GeneID" id="75170967"/>
<dbReference type="GeneID" id="945505"/>
<dbReference type="KEGG" id="ecj:JW0875"/>
<dbReference type="KEGG" id="eco:b0892"/>
<dbReference type="KEGG" id="ecoc:C3026_05520"/>
<dbReference type="PATRIC" id="fig|1411691.4.peg.1385"/>
<dbReference type="EchoBASE" id="EB2553"/>
<dbReference type="eggNOG" id="COG2256">
    <property type="taxonomic scope" value="Bacteria"/>
</dbReference>
<dbReference type="HOGENOM" id="CLU_017985_0_3_6"/>
<dbReference type="InParanoid" id="P0AAZ4"/>
<dbReference type="OMA" id="RIILSQC"/>
<dbReference type="OrthoDB" id="9778364at2"/>
<dbReference type="PhylomeDB" id="P0AAZ4"/>
<dbReference type="BioCyc" id="EcoCyc:EG12690-MONOMER"/>
<dbReference type="PRO" id="PR:P0AAZ4"/>
<dbReference type="Proteomes" id="UP000000625">
    <property type="component" value="Chromosome"/>
</dbReference>
<dbReference type="GO" id="GO:0030894">
    <property type="term" value="C:replisome"/>
    <property type="evidence" value="ECO:0000314"/>
    <property type="project" value="EcoliWiki"/>
</dbReference>
<dbReference type="GO" id="GO:0005524">
    <property type="term" value="F:ATP binding"/>
    <property type="evidence" value="ECO:0007669"/>
    <property type="project" value="UniProtKB-KW"/>
</dbReference>
<dbReference type="GO" id="GO:0016887">
    <property type="term" value="F:ATP hydrolysis activity"/>
    <property type="evidence" value="ECO:0007669"/>
    <property type="project" value="InterPro"/>
</dbReference>
<dbReference type="GO" id="GO:0008094">
    <property type="term" value="F:ATP-dependent activity, acting on DNA"/>
    <property type="evidence" value="ECO:0000314"/>
    <property type="project" value="EcoCyc"/>
</dbReference>
<dbReference type="GO" id="GO:0003677">
    <property type="term" value="F:DNA binding"/>
    <property type="evidence" value="ECO:0007669"/>
    <property type="project" value="InterPro"/>
</dbReference>
<dbReference type="GO" id="GO:0008047">
    <property type="term" value="F:enzyme activator activity"/>
    <property type="evidence" value="ECO:0000318"/>
    <property type="project" value="GO_Central"/>
</dbReference>
<dbReference type="GO" id="GO:0042802">
    <property type="term" value="F:identical protein binding"/>
    <property type="evidence" value="ECO:0000314"/>
    <property type="project" value="EcoCyc"/>
</dbReference>
<dbReference type="GO" id="GO:0017116">
    <property type="term" value="F:single-stranded DNA helicase activity"/>
    <property type="evidence" value="ECO:0000318"/>
    <property type="project" value="GO_Central"/>
</dbReference>
<dbReference type="GO" id="GO:0006310">
    <property type="term" value="P:DNA recombination"/>
    <property type="evidence" value="ECO:0000316"/>
    <property type="project" value="EcoCyc"/>
</dbReference>
<dbReference type="GO" id="GO:0000731">
    <property type="term" value="P:DNA synthesis involved in DNA repair"/>
    <property type="evidence" value="ECO:0000318"/>
    <property type="project" value="GO_Central"/>
</dbReference>
<dbReference type="GO" id="GO:0006261">
    <property type="term" value="P:DNA-templated DNA replication"/>
    <property type="evidence" value="ECO:0000316"/>
    <property type="project" value="EcoCyc"/>
</dbReference>
<dbReference type="GO" id="GO:0051289">
    <property type="term" value="P:protein homotetramerization"/>
    <property type="evidence" value="ECO:0000314"/>
    <property type="project" value="EcoCyc"/>
</dbReference>
<dbReference type="CDD" id="cd00009">
    <property type="entry name" value="AAA"/>
    <property type="match status" value="1"/>
</dbReference>
<dbReference type="CDD" id="cd18139">
    <property type="entry name" value="HLD_clamp_RarA"/>
    <property type="match status" value="1"/>
</dbReference>
<dbReference type="FunFam" id="1.20.272.10:FF:000001">
    <property type="entry name" value="Putative AAA family ATPase"/>
    <property type="match status" value="1"/>
</dbReference>
<dbReference type="FunFam" id="1.10.3710.10:FF:000001">
    <property type="entry name" value="Replication-associated recombination protein A"/>
    <property type="match status" value="1"/>
</dbReference>
<dbReference type="FunFam" id="1.10.8.60:FF:000029">
    <property type="entry name" value="Replication-associated recombination protein A"/>
    <property type="match status" value="1"/>
</dbReference>
<dbReference type="FunFam" id="3.40.50.300:FF:000137">
    <property type="entry name" value="Replication-associated recombination protein A"/>
    <property type="match status" value="1"/>
</dbReference>
<dbReference type="Gene3D" id="1.10.8.60">
    <property type="match status" value="1"/>
</dbReference>
<dbReference type="Gene3D" id="1.20.272.10">
    <property type="match status" value="1"/>
</dbReference>
<dbReference type="Gene3D" id="1.10.3710.10">
    <property type="entry name" value="DNA polymerase III clamp loader subunits, C-terminal domain"/>
    <property type="match status" value="1"/>
</dbReference>
<dbReference type="Gene3D" id="3.40.50.300">
    <property type="entry name" value="P-loop containing nucleotide triphosphate hydrolases"/>
    <property type="match status" value="1"/>
</dbReference>
<dbReference type="InterPro" id="IPR003593">
    <property type="entry name" value="AAA+_ATPase"/>
</dbReference>
<dbReference type="InterPro" id="IPR032423">
    <property type="entry name" value="AAA_assoc_2"/>
</dbReference>
<dbReference type="InterPro" id="IPR051314">
    <property type="entry name" value="AAA_ATPase_RarA/MGS1/WRNIP1"/>
</dbReference>
<dbReference type="InterPro" id="IPR003959">
    <property type="entry name" value="ATPase_AAA_core"/>
</dbReference>
<dbReference type="InterPro" id="IPR008921">
    <property type="entry name" value="DNA_pol3_clamp-load_cplx_C"/>
</dbReference>
<dbReference type="InterPro" id="IPR021886">
    <property type="entry name" value="MgsA_C"/>
</dbReference>
<dbReference type="InterPro" id="IPR027417">
    <property type="entry name" value="P-loop_NTPase"/>
</dbReference>
<dbReference type="PANTHER" id="PTHR13779:SF7">
    <property type="entry name" value="ATPASE WRNIP1"/>
    <property type="match status" value="1"/>
</dbReference>
<dbReference type="PANTHER" id="PTHR13779">
    <property type="entry name" value="WERNER HELICASE-INTERACTING PROTEIN 1 FAMILY MEMBER"/>
    <property type="match status" value="1"/>
</dbReference>
<dbReference type="Pfam" id="PF00004">
    <property type="entry name" value="AAA"/>
    <property type="match status" value="1"/>
</dbReference>
<dbReference type="Pfam" id="PF16193">
    <property type="entry name" value="AAA_assoc_2"/>
    <property type="match status" value="1"/>
</dbReference>
<dbReference type="Pfam" id="PF12002">
    <property type="entry name" value="MgsA_C"/>
    <property type="match status" value="1"/>
</dbReference>
<dbReference type="SMART" id="SM00382">
    <property type="entry name" value="AAA"/>
    <property type="match status" value="1"/>
</dbReference>
<dbReference type="SUPFAM" id="SSF52540">
    <property type="entry name" value="P-loop containing nucleoside triphosphate hydrolases"/>
    <property type="match status" value="1"/>
</dbReference>
<dbReference type="SUPFAM" id="SSF48019">
    <property type="entry name" value="post-AAA+ oligomerization domain-like"/>
    <property type="match status" value="1"/>
</dbReference>
<feature type="chain" id="PRO_0000168755" description="Replication-associated recombination protein A">
    <location>
        <begin position="1"/>
        <end position="447"/>
    </location>
</feature>
<feature type="binding site" evidence="7">
    <location>
        <begin position="57"/>
        <end position="64"/>
    </location>
    <ligand>
        <name>ATP</name>
        <dbReference type="ChEBI" id="CHEBI:30616"/>
    </ligand>
</feature>
<feature type="mutagenesis site" description="Lack of ATPase activity." evidence="3">
    <original>R</original>
    <variation>A</variation>
    <location>
        <position position="156"/>
    </location>
</feature>
<proteinExistence type="evidence at protein level"/>
<gene>
    <name evidence="4" type="primary">rarA</name>
    <name evidence="5" type="synonym">mgsA</name>
    <name type="synonym">ycaJ</name>
    <name type="ordered locus">b0892</name>
    <name type="ordered locus">JW0875</name>
</gene>